<accession>B3VZU3</accession>
<reference evidence="5 6" key="1">
    <citation type="journal article" date="2009" name="Comp. Biochem. Physiol.">
        <title>Characterization of antimicrobial peptides isolated from the skin of the Chinese frog, Rana dybowskii.</title>
        <authorList>
            <person name="Jin L.-L."/>
            <person name="Li Q."/>
            <person name="Song S.-S."/>
            <person name="Feng K."/>
            <person name="Zhang D.-B."/>
            <person name="Wang Q.-Y."/>
            <person name="Chen Y.-H."/>
        </authorList>
    </citation>
    <scope>NUCLEOTIDE SEQUENCE [MRNA]</scope>
    <scope>TISSUE SPECIFICITY</scope>
    <source>
        <tissue evidence="6">Skin</tissue>
    </source>
</reference>
<keyword id="KW-0027">Amidation</keyword>
<keyword id="KW-0878">Amphibian defense peptide</keyword>
<keyword id="KW-0044">Antibiotic</keyword>
<keyword id="KW-0929">Antimicrobial</keyword>
<keyword id="KW-0165">Cleavage on pair of basic residues</keyword>
<keyword id="KW-0964">Secreted</keyword>
<keyword id="KW-0732">Signal</keyword>
<proteinExistence type="evidence at transcript level"/>
<sequence>MFPLKKSLLLLFFLGTINFSFCEEERNAEEERRDDPEERDVAMEKRVLPLVGNLLNDLLGK</sequence>
<organism>
    <name type="scientific">Rana dybowskii</name>
    <name type="common">Dybovsky's frog</name>
    <name type="synonym">Korean brown frog</name>
    <dbReference type="NCBI Taxonomy" id="71582"/>
    <lineage>
        <taxon>Eukaryota</taxon>
        <taxon>Metazoa</taxon>
        <taxon>Chordata</taxon>
        <taxon>Craniata</taxon>
        <taxon>Vertebrata</taxon>
        <taxon>Euteleostomi</taxon>
        <taxon>Amphibia</taxon>
        <taxon>Batrachia</taxon>
        <taxon>Anura</taxon>
        <taxon>Neobatrachia</taxon>
        <taxon>Ranoidea</taxon>
        <taxon>Ranidae</taxon>
        <taxon>Rana</taxon>
        <taxon>Rana</taxon>
    </lineage>
</organism>
<name>TPCA_RANDY</name>
<dbReference type="EMBL" id="EU827803">
    <property type="protein sequence ID" value="ACF08003.1"/>
    <property type="molecule type" value="mRNA"/>
</dbReference>
<dbReference type="GO" id="GO:0005576">
    <property type="term" value="C:extracellular region"/>
    <property type="evidence" value="ECO:0000250"/>
    <property type="project" value="UniProtKB"/>
</dbReference>
<dbReference type="GO" id="GO:0050829">
    <property type="term" value="P:defense response to Gram-negative bacterium"/>
    <property type="evidence" value="ECO:0000250"/>
    <property type="project" value="UniProtKB"/>
</dbReference>
<dbReference type="GO" id="GO:0050830">
    <property type="term" value="P:defense response to Gram-positive bacterium"/>
    <property type="evidence" value="ECO:0000250"/>
    <property type="project" value="UniProtKB"/>
</dbReference>
<dbReference type="InterPro" id="IPR004275">
    <property type="entry name" value="Frog_antimicrobial_propeptide"/>
</dbReference>
<dbReference type="Pfam" id="PF03032">
    <property type="entry name" value="FSAP_sig_propep"/>
    <property type="match status" value="1"/>
</dbReference>
<protein>
    <recommendedName>
        <fullName evidence="4 6">Temporin-CDYa</fullName>
    </recommendedName>
</protein>
<feature type="signal peptide" evidence="2 6">
    <location>
        <begin position="1"/>
        <end position="22"/>
    </location>
</feature>
<feature type="propeptide" id="PRO_0000391432" evidence="1">
    <location>
        <begin position="23"/>
        <end position="44"/>
    </location>
</feature>
<feature type="peptide" id="PRO_5000381481" description="Temporin-CDYa" evidence="3">
    <location>
        <begin position="47"/>
        <end position="59"/>
    </location>
</feature>
<feature type="modified residue" description="Leucine amide" evidence="1">
    <location>
        <position position="59"/>
    </location>
</feature>
<comment type="function">
    <text evidence="1">Antimicrobial peptide.</text>
</comment>
<comment type="subcellular location">
    <subcellularLocation>
        <location evidence="1">Secreted</location>
    </subcellularLocation>
</comment>
<comment type="tissue specificity">
    <text evidence="3">Expressed by the skin glands.</text>
</comment>
<comment type="similarity">
    <text evidence="2">Belongs to the frog skin active peptide (FSAP) family. Temporin subfamily.</text>
</comment>
<evidence type="ECO:0000250" key="1">
    <source>
        <dbReference type="UniProtKB" id="P83307"/>
    </source>
</evidence>
<evidence type="ECO:0000255" key="2"/>
<evidence type="ECO:0000269" key="3">
    <source>
    </source>
</evidence>
<evidence type="ECO:0000303" key="4">
    <source>
    </source>
</evidence>
<evidence type="ECO:0000305" key="5"/>
<evidence type="ECO:0000312" key="6">
    <source>
        <dbReference type="EMBL" id="ACF08003.1"/>
    </source>
</evidence>